<reference key="1">
    <citation type="submission" date="2006-12" db="EMBL/GenBank/DDBJ databases">
        <authorList>
            <person name="Hendrix L."/>
            <person name="Mohamoud Y."/>
            <person name="Radune D."/>
            <person name="Shvartsbeyn A."/>
            <person name="Daugherty S."/>
            <person name="Dodson R."/>
            <person name="Durkin A.S."/>
            <person name="Harkins D."/>
            <person name="Huot H."/>
            <person name="Kothari S.P."/>
            <person name="Madupu R."/>
            <person name="Li J."/>
            <person name="Nelson W.C."/>
            <person name="Shrivastava S."/>
            <person name="Giglio M.G."/>
            <person name="Haft D."/>
            <person name="Selengut J."/>
            <person name="Fraser-Ligget C."/>
            <person name="Seshadri R."/>
        </authorList>
    </citation>
    <scope>NUCLEOTIDE SEQUENCE [LARGE SCALE GENOMIC DNA]</scope>
    <source>
        <strain>ATCC 35685 / KC583 / Herrer 020/F12,63</strain>
    </source>
</reference>
<gene>
    <name evidence="1" type="primary">gatA</name>
    <name type="ordered locus">BARBAKC583_0835</name>
</gene>
<name>GATA_BARBK</name>
<protein>
    <recommendedName>
        <fullName evidence="1">Glutamyl-tRNA(Gln) amidotransferase subunit A</fullName>
        <shortName evidence="1">Glu-ADT subunit A</shortName>
        <ecNumber evidence="1">6.3.5.7</ecNumber>
    </recommendedName>
</protein>
<sequence>MTDLTMLTIAQARDSLKKGDFKATELTEAYLQAIELANPILNAYVAVTAEQAMRMAAESDNRLAKGEAGILEGIPLGIKDLFATYDVHTQGCSYILDGFKPKYESTVTANLWKDGAVMLGKLNMDEFAMGSSNETSYYGPVINPWRKKGSDEKLVPGGSSGGSSAAVAARLCVGATATDTGGSIRQPAAFTGTVGIKPTYGRCSRWGTIAYASSLDQAGPIGRDVRDCAIMLRSMASFDRKDSTSVDLPIPDYEKCIGQSIKGMKIGIPKEYRLEWMSTEVIELWQKGMDFLKEAGAEIVDISLPHVKYALPSYYIVASAEASSNLARYDGVRFGLRMPGKDIVEMYEKTRSAGFGDEVKQRILIGTYVLSSGYYDAYYIKAQKVRTLIKNDFDQCFAIGVDAILTPVTPTPAFGLADEKIKNDSIAMYLNDIFTVPVNMVGLPGVSVPAGLSSSGLPLGLQLIGKPFAEEVILQIAYIIEQAAGTFSAKKWWP</sequence>
<comment type="function">
    <text evidence="1">Allows the formation of correctly charged Gln-tRNA(Gln) through the transamidation of misacylated Glu-tRNA(Gln) in organisms which lack glutaminyl-tRNA synthetase. The reaction takes place in the presence of glutamine and ATP through an activated gamma-phospho-Glu-tRNA(Gln).</text>
</comment>
<comment type="catalytic activity">
    <reaction evidence="1">
        <text>L-glutamyl-tRNA(Gln) + L-glutamine + ATP + H2O = L-glutaminyl-tRNA(Gln) + L-glutamate + ADP + phosphate + H(+)</text>
        <dbReference type="Rhea" id="RHEA:17521"/>
        <dbReference type="Rhea" id="RHEA-COMP:9681"/>
        <dbReference type="Rhea" id="RHEA-COMP:9684"/>
        <dbReference type="ChEBI" id="CHEBI:15377"/>
        <dbReference type="ChEBI" id="CHEBI:15378"/>
        <dbReference type="ChEBI" id="CHEBI:29985"/>
        <dbReference type="ChEBI" id="CHEBI:30616"/>
        <dbReference type="ChEBI" id="CHEBI:43474"/>
        <dbReference type="ChEBI" id="CHEBI:58359"/>
        <dbReference type="ChEBI" id="CHEBI:78520"/>
        <dbReference type="ChEBI" id="CHEBI:78521"/>
        <dbReference type="ChEBI" id="CHEBI:456216"/>
        <dbReference type="EC" id="6.3.5.7"/>
    </reaction>
</comment>
<comment type="subunit">
    <text evidence="1">Heterotrimer of A, B and C subunits.</text>
</comment>
<comment type="similarity">
    <text evidence="1">Belongs to the amidase family. GatA subfamily.</text>
</comment>
<feature type="chain" id="PRO_1000015800" description="Glutamyl-tRNA(Gln) amidotransferase subunit A">
    <location>
        <begin position="1"/>
        <end position="494"/>
    </location>
</feature>
<feature type="active site" description="Charge relay system" evidence="1">
    <location>
        <position position="79"/>
    </location>
</feature>
<feature type="active site" description="Charge relay system" evidence="1">
    <location>
        <position position="159"/>
    </location>
</feature>
<feature type="active site" description="Acyl-ester intermediate" evidence="1">
    <location>
        <position position="183"/>
    </location>
</feature>
<evidence type="ECO:0000255" key="1">
    <source>
        <dbReference type="HAMAP-Rule" id="MF_00120"/>
    </source>
</evidence>
<accession>A1UT20</accession>
<keyword id="KW-0067">ATP-binding</keyword>
<keyword id="KW-0436">Ligase</keyword>
<keyword id="KW-0547">Nucleotide-binding</keyword>
<keyword id="KW-0648">Protein biosynthesis</keyword>
<organism>
    <name type="scientific">Bartonella bacilliformis (strain ATCC 35685 / KC583 / Herrer 020/F12,63)</name>
    <dbReference type="NCBI Taxonomy" id="360095"/>
    <lineage>
        <taxon>Bacteria</taxon>
        <taxon>Pseudomonadati</taxon>
        <taxon>Pseudomonadota</taxon>
        <taxon>Alphaproteobacteria</taxon>
        <taxon>Hyphomicrobiales</taxon>
        <taxon>Bartonellaceae</taxon>
        <taxon>Bartonella</taxon>
    </lineage>
</organism>
<proteinExistence type="inferred from homology"/>
<dbReference type="EC" id="6.3.5.7" evidence="1"/>
<dbReference type="EMBL" id="CP000524">
    <property type="protein sequence ID" value="ABM45182.1"/>
    <property type="molecule type" value="Genomic_DNA"/>
</dbReference>
<dbReference type="RefSeq" id="WP_005767184.1">
    <property type="nucleotide sequence ID" value="NC_008783.1"/>
</dbReference>
<dbReference type="SMR" id="A1UT20"/>
<dbReference type="STRING" id="360095.BARBAKC583_0835"/>
<dbReference type="GeneID" id="4683790"/>
<dbReference type="KEGG" id="bbk:BARBAKC583_0835"/>
<dbReference type="PATRIC" id="fig|360095.6.peg.811"/>
<dbReference type="eggNOG" id="COG0154">
    <property type="taxonomic scope" value="Bacteria"/>
</dbReference>
<dbReference type="HOGENOM" id="CLU_009600_0_3_5"/>
<dbReference type="OrthoDB" id="9811471at2"/>
<dbReference type="Proteomes" id="UP000000643">
    <property type="component" value="Chromosome"/>
</dbReference>
<dbReference type="GO" id="GO:0030956">
    <property type="term" value="C:glutamyl-tRNA(Gln) amidotransferase complex"/>
    <property type="evidence" value="ECO:0007669"/>
    <property type="project" value="InterPro"/>
</dbReference>
<dbReference type="GO" id="GO:0005524">
    <property type="term" value="F:ATP binding"/>
    <property type="evidence" value="ECO:0007669"/>
    <property type="project" value="UniProtKB-KW"/>
</dbReference>
<dbReference type="GO" id="GO:0050567">
    <property type="term" value="F:glutaminyl-tRNA synthase (glutamine-hydrolyzing) activity"/>
    <property type="evidence" value="ECO:0007669"/>
    <property type="project" value="UniProtKB-UniRule"/>
</dbReference>
<dbReference type="GO" id="GO:0006412">
    <property type="term" value="P:translation"/>
    <property type="evidence" value="ECO:0007669"/>
    <property type="project" value="UniProtKB-UniRule"/>
</dbReference>
<dbReference type="Gene3D" id="3.90.1300.10">
    <property type="entry name" value="Amidase signature (AS) domain"/>
    <property type="match status" value="1"/>
</dbReference>
<dbReference type="HAMAP" id="MF_00120">
    <property type="entry name" value="GatA"/>
    <property type="match status" value="1"/>
</dbReference>
<dbReference type="InterPro" id="IPR000120">
    <property type="entry name" value="Amidase"/>
</dbReference>
<dbReference type="InterPro" id="IPR020556">
    <property type="entry name" value="Amidase_CS"/>
</dbReference>
<dbReference type="InterPro" id="IPR023631">
    <property type="entry name" value="Amidase_dom"/>
</dbReference>
<dbReference type="InterPro" id="IPR036928">
    <property type="entry name" value="AS_sf"/>
</dbReference>
<dbReference type="InterPro" id="IPR004412">
    <property type="entry name" value="GatA"/>
</dbReference>
<dbReference type="NCBIfam" id="TIGR00132">
    <property type="entry name" value="gatA"/>
    <property type="match status" value="1"/>
</dbReference>
<dbReference type="PANTHER" id="PTHR11895:SF151">
    <property type="entry name" value="GLUTAMYL-TRNA(GLN) AMIDOTRANSFERASE SUBUNIT A"/>
    <property type="match status" value="1"/>
</dbReference>
<dbReference type="PANTHER" id="PTHR11895">
    <property type="entry name" value="TRANSAMIDASE"/>
    <property type="match status" value="1"/>
</dbReference>
<dbReference type="Pfam" id="PF01425">
    <property type="entry name" value="Amidase"/>
    <property type="match status" value="1"/>
</dbReference>
<dbReference type="SUPFAM" id="SSF75304">
    <property type="entry name" value="Amidase signature (AS) enzymes"/>
    <property type="match status" value="1"/>
</dbReference>
<dbReference type="PROSITE" id="PS00571">
    <property type="entry name" value="AMIDASES"/>
    <property type="match status" value="1"/>
</dbReference>